<organism>
    <name type="scientific">Gallus gallus</name>
    <name type="common">Chicken</name>
    <dbReference type="NCBI Taxonomy" id="9031"/>
    <lineage>
        <taxon>Eukaryota</taxon>
        <taxon>Metazoa</taxon>
        <taxon>Chordata</taxon>
        <taxon>Craniata</taxon>
        <taxon>Vertebrata</taxon>
        <taxon>Euteleostomi</taxon>
        <taxon>Archelosauria</taxon>
        <taxon>Archosauria</taxon>
        <taxon>Dinosauria</taxon>
        <taxon>Saurischia</taxon>
        <taxon>Theropoda</taxon>
        <taxon>Coelurosauria</taxon>
        <taxon>Aves</taxon>
        <taxon>Neognathae</taxon>
        <taxon>Galloanserae</taxon>
        <taxon>Galliformes</taxon>
        <taxon>Phasianidae</taxon>
        <taxon>Phasianinae</taxon>
        <taxon>Gallus</taxon>
    </lineage>
</organism>
<comment type="function">
    <text evidence="1">Bifunctional DNA N-glycosylase with associated apurinic/apyrimidinic (AP) lyase function that catalyzes the first step in base excision repair (BER), the primary repair pathway for the repair of oxidative DNA damage. The DNA N-glycosylase activity releases the damaged DNA base from DNA by cleaving the N-glycosidic bond, leaving an AP site. The AP lyase activity cleaves the phosphodiester bond 3' to the AP site by a beta-elimination. Primarily recognizes and repairs oxidative base damage of pyrimidines.</text>
</comment>
<comment type="catalytic activity">
    <reaction evidence="1">
        <text>2'-deoxyribonucleotide-(2'-deoxyribose 5'-phosphate)-2'-deoxyribonucleotide-DNA = a 3'-end 2'-deoxyribonucleotide-(2,3-dehydro-2,3-deoxyribose 5'-phosphate)-DNA + a 5'-end 5'-phospho-2'-deoxyribonucleoside-DNA + H(+)</text>
        <dbReference type="Rhea" id="RHEA:66592"/>
        <dbReference type="Rhea" id="RHEA-COMP:13180"/>
        <dbReference type="Rhea" id="RHEA-COMP:16897"/>
        <dbReference type="Rhea" id="RHEA-COMP:17067"/>
        <dbReference type="ChEBI" id="CHEBI:15378"/>
        <dbReference type="ChEBI" id="CHEBI:136412"/>
        <dbReference type="ChEBI" id="CHEBI:157695"/>
        <dbReference type="ChEBI" id="CHEBI:167181"/>
        <dbReference type="EC" id="4.2.99.18"/>
    </reaction>
</comment>
<comment type="cofactor">
    <cofactor evidence="1">
        <name>[4Fe-4S] cluster</name>
        <dbReference type="ChEBI" id="CHEBI:49883"/>
    </cofactor>
    <text evidence="1">Binds 1 [4Fe-4S] cluster. The cluster does not appear to play a role in catalysis, but is probably involved in the proper positioning of the enzyme along the DNA strand.</text>
</comment>
<comment type="subcellular location">
    <subcellularLocation>
        <location evidence="1">Nucleus</location>
    </subcellularLocation>
    <subcellularLocation>
        <location evidence="1">Mitochondrion</location>
    </subcellularLocation>
</comment>
<comment type="similarity">
    <text evidence="1">Belongs to the Nth/MutY family.</text>
</comment>
<gene>
    <name evidence="1" type="primary">NTHL1</name>
</gene>
<proteinExistence type="evidence at transcript level"/>
<reference key="1">
    <citation type="journal article" date="2006" name="Chugokugakuen J.">
        <title>cDNA cloning and analysis of the chicken homolog of E. coli endonuclease III.</title>
        <authorList>
            <person name="Seki S."/>
            <person name="Sarker A.H."/>
            <person name="Nakamura T."/>
            <person name="Seki Y."/>
            <person name="Ikeda S."/>
        </authorList>
    </citation>
    <scope>NUCLEOTIDE SEQUENCE [MRNA]</scope>
</reference>
<reference key="2">
    <citation type="journal article" date="2007" name="Chugokugakuen J.">
        <title>Genomic structure and sequence of a chicken homolog (chNthl1) of Escherichia coli endonuclease III with those of the adjacent parts of chTsc2 and chSlc9a3r2 genes.</title>
        <authorList>
            <person name="Seki S."/>
            <person name="Sarker A.H."/>
            <person name="Nakamura T."/>
            <person name="Seki Y."/>
            <person name="Ikeda S."/>
        </authorList>
    </citation>
    <scope>NUCLEOTIDE SEQUENCE [GENOMIC DNA]</scope>
</reference>
<reference key="3">
    <citation type="journal article" date="2004" name="Nature">
        <title>Sequence and comparative analysis of the chicken genome provide unique perspectives on vertebrate evolution.</title>
        <authorList>
            <person name="Hillier L.W."/>
            <person name="Miller W."/>
            <person name="Birney E."/>
            <person name="Warren W."/>
            <person name="Hardison R.C."/>
            <person name="Ponting C.P."/>
            <person name="Bork P."/>
            <person name="Burt D.W."/>
            <person name="Groenen M.A.M."/>
            <person name="Delany M.E."/>
            <person name="Dodgson J.B."/>
            <person name="Chinwalla A.T."/>
            <person name="Cliften P.F."/>
            <person name="Clifton S.W."/>
            <person name="Delehaunty K.D."/>
            <person name="Fronick C."/>
            <person name="Fulton R.S."/>
            <person name="Graves T.A."/>
            <person name="Kremitzki C."/>
            <person name="Layman D."/>
            <person name="Magrini V."/>
            <person name="McPherson J.D."/>
            <person name="Miner T.L."/>
            <person name="Minx P."/>
            <person name="Nash W.E."/>
            <person name="Nhan M.N."/>
            <person name="Nelson J.O."/>
            <person name="Oddy L.G."/>
            <person name="Pohl C.S."/>
            <person name="Randall-Maher J."/>
            <person name="Smith S.M."/>
            <person name="Wallis J.W."/>
            <person name="Yang S.-P."/>
            <person name="Romanov M.N."/>
            <person name="Rondelli C.M."/>
            <person name="Paton B."/>
            <person name="Smith J."/>
            <person name="Morrice D."/>
            <person name="Daniels L."/>
            <person name="Tempest H.G."/>
            <person name="Robertson L."/>
            <person name="Masabanda J.S."/>
            <person name="Griffin D.K."/>
            <person name="Vignal A."/>
            <person name="Fillon V."/>
            <person name="Jacobbson L."/>
            <person name="Kerje S."/>
            <person name="Andersson L."/>
            <person name="Crooijmans R.P."/>
            <person name="Aerts J."/>
            <person name="van der Poel J.J."/>
            <person name="Ellegren H."/>
            <person name="Caldwell R.B."/>
            <person name="Hubbard S.J."/>
            <person name="Grafham D.V."/>
            <person name="Kierzek A.M."/>
            <person name="McLaren S.R."/>
            <person name="Overton I.M."/>
            <person name="Arakawa H."/>
            <person name="Beattie K.J."/>
            <person name="Bezzubov Y."/>
            <person name="Boardman P.E."/>
            <person name="Bonfield J.K."/>
            <person name="Croning M.D.R."/>
            <person name="Davies R.M."/>
            <person name="Francis M.D."/>
            <person name="Humphray S.J."/>
            <person name="Scott C.E."/>
            <person name="Taylor R.G."/>
            <person name="Tickle C."/>
            <person name="Brown W.R.A."/>
            <person name="Rogers J."/>
            <person name="Buerstedde J.-M."/>
            <person name="Wilson S.A."/>
            <person name="Stubbs L."/>
            <person name="Ovcharenko I."/>
            <person name="Gordon L."/>
            <person name="Lucas S."/>
            <person name="Miller M.M."/>
            <person name="Inoko H."/>
            <person name="Shiina T."/>
            <person name="Kaufman J."/>
            <person name="Salomonsen J."/>
            <person name="Skjoedt K."/>
            <person name="Wong G.K.-S."/>
            <person name="Wang J."/>
            <person name="Liu B."/>
            <person name="Wang J."/>
            <person name="Yu J."/>
            <person name="Yang H."/>
            <person name="Nefedov M."/>
            <person name="Koriabine M."/>
            <person name="Dejong P.J."/>
            <person name="Goodstadt L."/>
            <person name="Webber C."/>
            <person name="Dickens N.J."/>
            <person name="Letunic I."/>
            <person name="Suyama M."/>
            <person name="Torrents D."/>
            <person name="von Mering C."/>
            <person name="Zdobnov E.M."/>
            <person name="Makova K."/>
            <person name="Nekrutenko A."/>
            <person name="Elnitski L."/>
            <person name="Eswara P."/>
            <person name="King D.C."/>
            <person name="Yang S.-P."/>
            <person name="Tyekucheva S."/>
            <person name="Radakrishnan A."/>
            <person name="Harris R.S."/>
            <person name="Chiaromonte F."/>
            <person name="Taylor J."/>
            <person name="He J."/>
            <person name="Rijnkels M."/>
            <person name="Griffiths-Jones S."/>
            <person name="Ureta-Vidal A."/>
            <person name="Hoffman M.M."/>
            <person name="Severin J."/>
            <person name="Searle S.M.J."/>
            <person name="Law A.S."/>
            <person name="Speed D."/>
            <person name="Waddington D."/>
            <person name="Cheng Z."/>
            <person name="Tuzun E."/>
            <person name="Eichler E."/>
            <person name="Bao Z."/>
            <person name="Flicek P."/>
            <person name="Shteynberg D.D."/>
            <person name="Brent M.R."/>
            <person name="Bye J.M."/>
            <person name="Huckle E.J."/>
            <person name="Chatterji S."/>
            <person name="Dewey C."/>
            <person name="Pachter L."/>
            <person name="Kouranov A."/>
            <person name="Mourelatos Z."/>
            <person name="Hatzigeorgiou A.G."/>
            <person name="Paterson A.H."/>
            <person name="Ivarie R."/>
            <person name="Brandstrom M."/>
            <person name="Axelsson E."/>
            <person name="Backstrom N."/>
            <person name="Berlin S."/>
            <person name="Webster M.T."/>
            <person name="Pourquie O."/>
            <person name="Reymond A."/>
            <person name="Ucla C."/>
            <person name="Antonarakis S.E."/>
            <person name="Long M."/>
            <person name="Emerson J.J."/>
            <person name="Betran E."/>
            <person name="Dupanloup I."/>
            <person name="Kaessmann H."/>
            <person name="Hinrichs A.S."/>
            <person name="Bejerano G."/>
            <person name="Furey T.S."/>
            <person name="Harte R.A."/>
            <person name="Raney B."/>
            <person name="Siepel A."/>
            <person name="Kent W.J."/>
            <person name="Haussler D."/>
            <person name="Eyras E."/>
            <person name="Castelo R."/>
            <person name="Abril J.F."/>
            <person name="Castellano S."/>
            <person name="Camara F."/>
            <person name="Parra G."/>
            <person name="Guigo R."/>
            <person name="Bourque G."/>
            <person name="Tesler G."/>
            <person name="Pevzner P.A."/>
            <person name="Smit A."/>
            <person name="Fulton L.A."/>
            <person name="Mardis E.R."/>
            <person name="Wilson R.K."/>
        </authorList>
    </citation>
    <scope>NUCLEOTIDE SEQUENCE [LARGE SCALE GENOMIC DNA]</scope>
    <source>
        <strain>Red jungle fowl</strain>
    </source>
</reference>
<protein>
    <recommendedName>
        <fullName evidence="1">Endonuclease III-like protein 1</fullName>
        <ecNumber evidence="1">3.2.2.-</ecNumber>
        <ecNumber evidence="1">4.2.99.18</ecNumber>
    </recommendedName>
    <alternativeName>
        <fullName evidence="1">Bifunctional DNA N-glycosylase/DNA-(apurinic or apyrimidinic site) lyase</fullName>
        <shortName evidence="1">DNA glycosylase/AP lyase</shortName>
    </alternativeName>
</protein>
<dbReference type="EC" id="3.2.2.-" evidence="1"/>
<dbReference type="EC" id="4.2.99.18" evidence="1"/>
<dbReference type="EMBL" id="AB284187">
    <property type="protein sequence ID" value="BAF37123.1"/>
    <property type="molecule type" value="mRNA"/>
</dbReference>
<dbReference type="EMBL" id="AB358957">
    <property type="protein sequence ID" value="BAF76070.1"/>
    <property type="molecule type" value="Genomic_DNA"/>
</dbReference>
<dbReference type="EMBL" id="AADN03006815">
    <property type="status" value="NOT_ANNOTATED_CDS"/>
    <property type="molecule type" value="Genomic_DNA"/>
</dbReference>
<dbReference type="RefSeq" id="NP_001073043.1">
    <property type="nucleotide sequence ID" value="NM_001079575.1"/>
</dbReference>
<dbReference type="SMR" id="A7M7B9"/>
<dbReference type="FunCoup" id="A7M7B9">
    <property type="interactions" value="779"/>
</dbReference>
<dbReference type="STRING" id="9031.ENSGALP00000008999"/>
<dbReference type="PaxDb" id="9031-ENSGALP00000008999"/>
<dbReference type="GeneID" id="416551"/>
<dbReference type="KEGG" id="gga:416551"/>
<dbReference type="CTD" id="4913"/>
<dbReference type="VEuPathDB" id="HostDB:geneid_416551"/>
<dbReference type="eggNOG" id="KOG1921">
    <property type="taxonomic scope" value="Eukaryota"/>
</dbReference>
<dbReference type="HOGENOM" id="CLU_012862_4_2_1"/>
<dbReference type="InParanoid" id="A7M7B9"/>
<dbReference type="OrthoDB" id="2099276at2759"/>
<dbReference type="TreeFam" id="TF314967"/>
<dbReference type="Reactome" id="R-GGA-110329">
    <property type="pathway name" value="Cleavage of the damaged pyrimidine"/>
</dbReference>
<dbReference type="PRO" id="PR:A7M7B9"/>
<dbReference type="Proteomes" id="UP000000539">
    <property type="component" value="Chromosome 14"/>
</dbReference>
<dbReference type="Bgee" id="ENSGALG00000005617">
    <property type="expression patterns" value="Expressed in liver and 13 other cell types or tissues"/>
</dbReference>
<dbReference type="GO" id="GO:0005739">
    <property type="term" value="C:mitochondrion"/>
    <property type="evidence" value="ECO:0007669"/>
    <property type="project" value="UniProtKB-SubCell"/>
</dbReference>
<dbReference type="GO" id="GO:0005634">
    <property type="term" value="C:nucleus"/>
    <property type="evidence" value="ECO:0000318"/>
    <property type="project" value="GO_Central"/>
</dbReference>
<dbReference type="GO" id="GO:0051539">
    <property type="term" value="F:4 iron, 4 sulfur cluster binding"/>
    <property type="evidence" value="ECO:0007669"/>
    <property type="project" value="UniProtKB-KW"/>
</dbReference>
<dbReference type="GO" id="GO:0140078">
    <property type="term" value="F:class I DNA-(apurinic or apyrimidinic site) endonuclease activity"/>
    <property type="evidence" value="ECO:0007669"/>
    <property type="project" value="UniProtKB-EC"/>
</dbReference>
<dbReference type="GO" id="GO:0003677">
    <property type="term" value="F:DNA binding"/>
    <property type="evidence" value="ECO:0007669"/>
    <property type="project" value="UniProtKB-UniRule"/>
</dbReference>
<dbReference type="GO" id="GO:0003906">
    <property type="term" value="F:DNA-(apurinic or apyrimidinic site) endonuclease activity"/>
    <property type="evidence" value="ECO:0000318"/>
    <property type="project" value="GO_Central"/>
</dbReference>
<dbReference type="GO" id="GO:0046872">
    <property type="term" value="F:metal ion binding"/>
    <property type="evidence" value="ECO:0007669"/>
    <property type="project" value="UniProtKB-KW"/>
</dbReference>
<dbReference type="GO" id="GO:0000703">
    <property type="term" value="F:oxidized pyrimidine nucleobase lesion DNA N-glycosylase activity"/>
    <property type="evidence" value="ECO:0000318"/>
    <property type="project" value="GO_Central"/>
</dbReference>
<dbReference type="GO" id="GO:0006285">
    <property type="term" value="P:base-excision repair, AP site formation"/>
    <property type="evidence" value="ECO:0000318"/>
    <property type="project" value="GO_Central"/>
</dbReference>
<dbReference type="GO" id="GO:0006289">
    <property type="term" value="P:nucleotide-excision repair"/>
    <property type="evidence" value="ECO:0000318"/>
    <property type="project" value="GO_Central"/>
</dbReference>
<dbReference type="CDD" id="cd00056">
    <property type="entry name" value="ENDO3c"/>
    <property type="match status" value="1"/>
</dbReference>
<dbReference type="FunFam" id="1.10.1670.10:FF:000003">
    <property type="entry name" value="Endonuclease III homolog"/>
    <property type="match status" value="1"/>
</dbReference>
<dbReference type="FunFam" id="1.10.340.30:FF:000005">
    <property type="entry name" value="Endonuclease III-like protein 1"/>
    <property type="match status" value="1"/>
</dbReference>
<dbReference type="Gene3D" id="1.10.1670.10">
    <property type="entry name" value="Helix-hairpin-Helix base-excision DNA repair enzymes (C-terminal)"/>
    <property type="match status" value="1"/>
</dbReference>
<dbReference type="Gene3D" id="1.10.340.30">
    <property type="entry name" value="Hypothetical protein, domain 2"/>
    <property type="match status" value="1"/>
</dbReference>
<dbReference type="HAMAP" id="MF_03183">
    <property type="entry name" value="Endonuclease_III_Nth"/>
    <property type="match status" value="1"/>
</dbReference>
<dbReference type="InterPro" id="IPR011257">
    <property type="entry name" value="DNA_glycosylase"/>
</dbReference>
<dbReference type="InterPro" id="IPR004036">
    <property type="entry name" value="Endonuclease-III-like_CS2"/>
</dbReference>
<dbReference type="InterPro" id="IPR004035">
    <property type="entry name" value="Endouclease-III_FeS-bd_BS"/>
</dbReference>
<dbReference type="InterPro" id="IPR003265">
    <property type="entry name" value="HhH-GPD_domain"/>
</dbReference>
<dbReference type="InterPro" id="IPR023170">
    <property type="entry name" value="HhH_base_excis_C"/>
</dbReference>
<dbReference type="InterPro" id="IPR000445">
    <property type="entry name" value="HhH_motif"/>
</dbReference>
<dbReference type="InterPro" id="IPR030841">
    <property type="entry name" value="NTH1"/>
</dbReference>
<dbReference type="PANTHER" id="PTHR43286">
    <property type="entry name" value="ENDONUCLEASE III-LIKE PROTEIN 1"/>
    <property type="match status" value="1"/>
</dbReference>
<dbReference type="PANTHER" id="PTHR43286:SF1">
    <property type="entry name" value="ENDONUCLEASE III-LIKE PROTEIN 1"/>
    <property type="match status" value="1"/>
</dbReference>
<dbReference type="Pfam" id="PF00633">
    <property type="entry name" value="HHH"/>
    <property type="match status" value="1"/>
</dbReference>
<dbReference type="Pfam" id="PF00730">
    <property type="entry name" value="HhH-GPD"/>
    <property type="match status" value="1"/>
</dbReference>
<dbReference type="SMART" id="SM00478">
    <property type="entry name" value="ENDO3c"/>
    <property type="match status" value="1"/>
</dbReference>
<dbReference type="SUPFAM" id="SSF48150">
    <property type="entry name" value="DNA-glycosylase"/>
    <property type="match status" value="1"/>
</dbReference>
<dbReference type="PROSITE" id="PS00764">
    <property type="entry name" value="ENDONUCLEASE_III_1"/>
    <property type="match status" value="1"/>
</dbReference>
<dbReference type="PROSITE" id="PS01155">
    <property type="entry name" value="ENDONUCLEASE_III_2"/>
    <property type="match status" value="1"/>
</dbReference>
<evidence type="ECO:0000255" key="1">
    <source>
        <dbReference type="HAMAP-Rule" id="MF_03183"/>
    </source>
</evidence>
<evidence type="ECO:0000256" key="2">
    <source>
        <dbReference type="SAM" id="MobiDB-lite"/>
    </source>
</evidence>
<evidence type="ECO:0000305" key="3"/>
<name>NTH_CHICK</name>
<feature type="transit peptide" description="Mitochondrion" evidence="1">
    <location>
        <begin position="1"/>
        <end position="17"/>
    </location>
</feature>
<feature type="chain" id="PRO_0000428803" description="Endonuclease III-like protein 1">
    <location>
        <begin position="18"/>
        <end position="281"/>
    </location>
</feature>
<feature type="domain" description="HhH" evidence="1">
    <location>
        <begin position="168"/>
        <end position="192"/>
    </location>
</feature>
<feature type="region of interest" description="Disordered" evidence="2">
    <location>
        <begin position="1"/>
        <end position="60"/>
    </location>
</feature>
<feature type="compositionally biased region" description="Low complexity" evidence="2">
    <location>
        <begin position="15"/>
        <end position="24"/>
    </location>
</feature>
<feature type="active site" description="Nucleophile; for N-glycosylase activity" evidence="1">
    <location>
        <position position="189"/>
    </location>
</feature>
<feature type="binding site" evidence="1">
    <location>
        <position position="259"/>
    </location>
    <ligand>
        <name>[4Fe-4S] cluster</name>
        <dbReference type="ChEBI" id="CHEBI:49883"/>
    </ligand>
</feature>
<feature type="binding site" evidence="1">
    <location>
        <position position="266"/>
    </location>
    <ligand>
        <name>[4Fe-4S] cluster</name>
        <dbReference type="ChEBI" id="CHEBI:49883"/>
    </ligand>
</feature>
<feature type="binding site" evidence="1">
    <location>
        <position position="269"/>
    </location>
    <ligand>
        <name>[4Fe-4S] cluster</name>
        <dbReference type="ChEBI" id="CHEBI:49883"/>
    </ligand>
</feature>
<feature type="binding site" evidence="1">
    <location>
        <position position="275"/>
    </location>
    <ligand>
        <name>[4Fe-4S] cluster</name>
        <dbReference type="ChEBI" id="CHEBI:49883"/>
    </ligand>
</feature>
<feature type="site" description="Important for catalytic activity" evidence="1">
    <location>
        <position position="208"/>
    </location>
</feature>
<feature type="sequence conflict" description="In Ref. 1; BAF37123." evidence="3" ref="1">
    <original>T</original>
    <variation>A</variation>
    <location>
        <position position="277"/>
    </location>
</feature>
<keyword id="KW-0004">4Fe-4S</keyword>
<keyword id="KW-0227">DNA damage</keyword>
<keyword id="KW-0234">DNA repair</keyword>
<keyword id="KW-0326">Glycosidase</keyword>
<keyword id="KW-0378">Hydrolase</keyword>
<keyword id="KW-0408">Iron</keyword>
<keyword id="KW-0411">Iron-sulfur</keyword>
<keyword id="KW-0456">Lyase</keyword>
<keyword id="KW-0479">Metal-binding</keyword>
<keyword id="KW-0496">Mitochondrion</keyword>
<keyword id="KW-0539">Nucleus</keyword>
<keyword id="KW-1185">Reference proteome</keyword>
<keyword id="KW-0809">Transit peptide</keyword>
<accession>A7M7B9</accession>
<accession>A0ZT94</accession>
<accession>F1NQP6</accession>
<sequence>MCAAAPRGGGRAARRLGAATAGSRVPSAAPRYSRRTRRVPIAYEAEPKPESPGPKWEPENWQQQLERIREMRRHRDAPVDEMGVDKCYDTSAPPQVMRYQVLLSLMLSSQTKDQVTSAAMLRLRQRGLTVDSILQMDDATLGQIIYPVGFWRNKVKYIKQTTAILKQKYGGDIPGTVEELVKLPGVGPKMAHLAMNIAWNSVSGIAVDTHVHRITNRLKWVKKETRYPEETRVALEDWLPRDLWREINWLLVGFGQQTCLPVNPRCKECLNQDICPTAKRF</sequence>